<name>MRAZ_PSEU2</name>
<sequence length="151" mass="17152">MFRGANAINLDAKGRLAMPSRYRDELDSRSAGQLIVTIDAVDPCLCLYPLSEWELIEAKLRDLATFREENRRLQRLLIGNAVDLELDGSGRFLVPPRLREYAKLDKRVMLVGQLNKFQLWDEDAWNALADADLAAIQKPGAMPDELRDLIL</sequence>
<comment type="subunit">
    <text evidence="1">Forms oligomers.</text>
</comment>
<comment type="subcellular location">
    <subcellularLocation>
        <location evidence="1">Cytoplasm</location>
        <location evidence="1">Nucleoid</location>
    </subcellularLocation>
</comment>
<comment type="similarity">
    <text evidence="1">Belongs to the MraZ family.</text>
</comment>
<proteinExistence type="inferred from homology"/>
<evidence type="ECO:0000255" key="1">
    <source>
        <dbReference type="HAMAP-Rule" id="MF_01008"/>
    </source>
</evidence>
<evidence type="ECO:0000255" key="2">
    <source>
        <dbReference type="PROSITE-ProRule" id="PRU01076"/>
    </source>
</evidence>
<accession>Q4ZNY1</accession>
<protein>
    <recommendedName>
        <fullName>Transcriptional regulator MraZ</fullName>
    </recommendedName>
</protein>
<feature type="chain" id="PRO_0000230103" description="Transcriptional regulator MraZ">
    <location>
        <begin position="1"/>
        <end position="151"/>
    </location>
</feature>
<feature type="domain" description="SpoVT-AbrB 1" evidence="2">
    <location>
        <begin position="5"/>
        <end position="52"/>
    </location>
</feature>
<feature type="domain" description="SpoVT-AbrB 2" evidence="2">
    <location>
        <begin position="81"/>
        <end position="124"/>
    </location>
</feature>
<keyword id="KW-0963">Cytoplasm</keyword>
<keyword id="KW-0238">DNA-binding</keyword>
<keyword id="KW-0677">Repeat</keyword>
<keyword id="KW-0804">Transcription</keyword>
<keyword id="KW-0805">Transcription regulation</keyword>
<gene>
    <name evidence="1" type="primary">mraZ</name>
    <name type="ordered locus">Psyr_4111</name>
</gene>
<dbReference type="EMBL" id="CP000075">
    <property type="protein sequence ID" value="AAY39141.1"/>
    <property type="molecule type" value="Genomic_DNA"/>
</dbReference>
<dbReference type="RefSeq" id="WP_003406034.1">
    <property type="nucleotide sequence ID" value="NC_007005.1"/>
</dbReference>
<dbReference type="RefSeq" id="YP_237179.1">
    <property type="nucleotide sequence ID" value="NC_007005.1"/>
</dbReference>
<dbReference type="SMR" id="Q4ZNY1"/>
<dbReference type="STRING" id="205918.Psyr_4111"/>
<dbReference type="KEGG" id="psb:Psyr_4111"/>
<dbReference type="PATRIC" id="fig|205918.7.peg.4229"/>
<dbReference type="eggNOG" id="COG2001">
    <property type="taxonomic scope" value="Bacteria"/>
</dbReference>
<dbReference type="HOGENOM" id="CLU_107907_2_0_6"/>
<dbReference type="OrthoDB" id="9807753at2"/>
<dbReference type="Proteomes" id="UP000000426">
    <property type="component" value="Chromosome"/>
</dbReference>
<dbReference type="GO" id="GO:0005737">
    <property type="term" value="C:cytoplasm"/>
    <property type="evidence" value="ECO:0007669"/>
    <property type="project" value="UniProtKB-UniRule"/>
</dbReference>
<dbReference type="GO" id="GO:0009295">
    <property type="term" value="C:nucleoid"/>
    <property type="evidence" value="ECO:0007669"/>
    <property type="project" value="UniProtKB-SubCell"/>
</dbReference>
<dbReference type="GO" id="GO:0003700">
    <property type="term" value="F:DNA-binding transcription factor activity"/>
    <property type="evidence" value="ECO:0007669"/>
    <property type="project" value="UniProtKB-UniRule"/>
</dbReference>
<dbReference type="GO" id="GO:0000976">
    <property type="term" value="F:transcription cis-regulatory region binding"/>
    <property type="evidence" value="ECO:0007669"/>
    <property type="project" value="TreeGrafter"/>
</dbReference>
<dbReference type="GO" id="GO:2000143">
    <property type="term" value="P:negative regulation of DNA-templated transcription initiation"/>
    <property type="evidence" value="ECO:0007669"/>
    <property type="project" value="TreeGrafter"/>
</dbReference>
<dbReference type="CDD" id="cd16321">
    <property type="entry name" value="MraZ_C"/>
    <property type="match status" value="1"/>
</dbReference>
<dbReference type="CDD" id="cd16320">
    <property type="entry name" value="MraZ_N"/>
    <property type="match status" value="1"/>
</dbReference>
<dbReference type="FunFam" id="3.40.1550.20:FF:000001">
    <property type="entry name" value="Transcriptional regulator MraZ"/>
    <property type="match status" value="1"/>
</dbReference>
<dbReference type="Gene3D" id="3.40.1550.20">
    <property type="entry name" value="Transcriptional regulator MraZ domain"/>
    <property type="match status" value="1"/>
</dbReference>
<dbReference type="HAMAP" id="MF_01008">
    <property type="entry name" value="MraZ"/>
    <property type="match status" value="1"/>
</dbReference>
<dbReference type="InterPro" id="IPR003444">
    <property type="entry name" value="MraZ"/>
</dbReference>
<dbReference type="InterPro" id="IPR035644">
    <property type="entry name" value="MraZ_C"/>
</dbReference>
<dbReference type="InterPro" id="IPR020603">
    <property type="entry name" value="MraZ_dom"/>
</dbReference>
<dbReference type="InterPro" id="IPR035642">
    <property type="entry name" value="MraZ_N"/>
</dbReference>
<dbReference type="InterPro" id="IPR038619">
    <property type="entry name" value="MraZ_sf"/>
</dbReference>
<dbReference type="InterPro" id="IPR007159">
    <property type="entry name" value="SpoVT-AbrB_dom"/>
</dbReference>
<dbReference type="InterPro" id="IPR037914">
    <property type="entry name" value="SpoVT-AbrB_sf"/>
</dbReference>
<dbReference type="NCBIfam" id="TIGR00242">
    <property type="entry name" value="division/cell wall cluster transcriptional repressor MraZ"/>
    <property type="match status" value="1"/>
</dbReference>
<dbReference type="PANTHER" id="PTHR34701">
    <property type="entry name" value="TRANSCRIPTIONAL REGULATOR MRAZ"/>
    <property type="match status" value="1"/>
</dbReference>
<dbReference type="PANTHER" id="PTHR34701:SF1">
    <property type="entry name" value="TRANSCRIPTIONAL REGULATOR MRAZ"/>
    <property type="match status" value="1"/>
</dbReference>
<dbReference type="Pfam" id="PF02381">
    <property type="entry name" value="MraZ"/>
    <property type="match status" value="2"/>
</dbReference>
<dbReference type="SUPFAM" id="SSF89447">
    <property type="entry name" value="AbrB/MazE/MraZ-like"/>
    <property type="match status" value="1"/>
</dbReference>
<dbReference type="PROSITE" id="PS51740">
    <property type="entry name" value="SPOVT_ABRB"/>
    <property type="match status" value="2"/>
</dbReference>
<organism>
    <name type="scientific">Pseudomonas syringae pv. syringae (strain B728a)</name>
    <dbReference type="NCBI Taxonomy" id="205918"/>
    <lineage>
        <taxon>Bacteria</taxon>
        <taxon>Pseudomonadati</taxon>
        <taxon>Pseudomonadota</taxon>
        <taxon>Gammaproteobacteria</taxon>
        <taxon>Pseudomonadales</taxon>
        <taxon>Pseudomonadaceae</taxon>
        <taxon>Pseudomonas</taxon>
        <taxon>Pseudomonas syringae</taxon>
    </lineage>
</organism>
<reference key="1">
    <citation type="journal article" date="2005" name="Proc. Natl. Acad. Sci. U.S.A.">
        <title>Comparison of the complete genome sequences of Pseudomonas syringae pv. syringae B728a and pv. tomato DC3000.</title>
        <authorList>
            <person name="Feil H."/>
            <person name="Feil W.S."/>
            <person name="Chain P."/>
            <person name="Larimer F."/>
            <person name="Dibartolo G."/>
            <person name="Copeland A."/>
            <person name="Lykidis A."/>
            <person name="Trong S."/>
            <person name="Nolan M."/>
            <person name="Goltsman E."/>
            <person name="Thiel J."/>
            <person name="Malfatti S."/>
            <person name="Loper J.E."/>
            <person name="Lapidus A."/>
            <person name="Detter J.C."/>
            <person name="Land M."/>
            <person name="Richardson P.M."/>
            <person name="Kyrpides N.C."/>
            <person name="Ivanova N."/>
            <person name="Lindow S.E."/>
        </authorList>
    </citation>
    <scope>NUCLEOTIDE SEQUENCE [LARGE SCALE GENOMIC DNA]</scope>
    <source>
        <strain>B728a</strain>
    </source>
</reference>